<organism>
    <name type="scientific">Streptococcus pneumoniae (strain 70585)</name>
    <dbReference type="NCBI Taxonomy" id="488221"/>
    <lineage>
        <taxon>Bacteria</taxon>
        <taxon>Bacillati</taxon>
        <taxon>Bacillota</taxon>
        <taxon>Bacilli</taxon>
        <taxon>Lactobacillales</taxon>
        <taxon>Streptococcaceae</taxon>
        <taxon>Streptococcus</taxon>
    </lineage>
</organism>
<keyword id="KW-0067">ATP-binding</keyword>
<keyword id="KW-0963">Cytoplasm</keyword>
<keyword id="KW-0418">Kinase</keyword>
<keyword id="KW-0545">Nucleotide biosynthesis</keyword>
<keyword id="KW-0547">Nucleotide-binding</keyword>
<keyword id="KW-0808">Transferase</keyword>
<gene>
    <name evidence="1" type="primary">adk</name>
    <name type="ordered locus">SP70585_0286</name>
</gene>
<reference key="1">
    <citation type="journal article" date="2010" name="Genome Biol.">
        <title>Structure and dynamics of the pan-genome of Streptococcus pneumoniae and closely related species.</title>
        <authorList>
            <person name="Donati C."/>
            <person name="Hiller N.L."/>
            <person name="Tettelin H."/>
            <person name="Muzzi A."/>
            <person name="Croucher N.J."/>
            <person name="Angiuoli S.V."/>
            <person name="Oggioni M."/>
            <person name="Dunning Hotopp J.C."/>
            <person name="Hu F.Z."/>
            <person name="Riley D.R."/>
            <person name="Covacci A."/>
            <person name="Mitchell T.J."/>
            <person name="Bentley S.D."/>
            <person name="Kilian M."/>
            <person name="Ehrlich G.D."/>
            <person name="Rappuoli R."/>
            <person name="Moxon E.R."/>
            <person name="Masignani V."/>
        </authorList>
    </citation>
    <scope>NUCLEOTIDE SEQUENCE [LARGE SCALE GENOMIC DNA]</scope>
    <source>
        <strain>70585</strain>
    </source>
</reference>
<sequence>MNLLIMGLPGAGKGTQAAKIVEQFHVAHISTGDMFRAAMVNQTEMGVLAKSYIDKGELVPDEVTNGIVKERLSQDDIKETGFLLDGYPRTIEQAHALDKTLAELGIELEGVINIEVNPDSLLERLSGRIIHRVTGETFHKVFNPPVDYKEEDYYQREDDKPETVKRRLDVNIAQGEPIIAHYRAKGLVHDIEGNQDINDVFSDIEKVLTNLK</sequence>
<feature type="chain" id="PRO_1000191168" description="Adenylate kinase">
    <location>
        <begin position="1"/>
        <end position="212"/>
    </location>
</feature>
<feature type="region of interest" description="NMP" evidence="1">
    <location>
        <begin position="30"/>
        <end position="59"/>
    </location>
</feature>
<feature type="region of interest" description="LID" evidence="1">
    <location>
        <begin position="127"/>
        <end position="159"/>
    </location>
</feature>
<feature type="binding site" evidence="1">
    <location>
        <begin position="10"/>
        <end position="15"/>
    </location>
    <ligand>
        <name>ATP</name>
        <dbReference type="ChEBI" id="CHEBI:30616"/>
    </ligand>
</feature>
<feature type="binding site" evidence="1">
    <location>
        <position position="31"/>
    </location>
    <ligand>
        <name>AMP</name>
        <dbReference type="ChEBI" id="CHEBI:456215"/>
    </ligand>
</feature>
<feature type="binding site" evidence="1">
    <location>
        <position position="36"/>
    </location>
    <ligand>
        <name>AMP</name>
        <dbReference type="ChEBI" id="CHEBI:456215"/>
    </ligand>
</feature>
<feature type="binding site" evidence="1">
    <location>
        <begin position="57"/>
        <end position="59"/>
    </location>
    <ligand>
        <name>AMP</name>
        <dbReference type="ChEBI" id="CHEBI:456215"/>
    </ligand>
</feature>
<feature type="binding site" evidence="1">
    <location>
        <begin position="86"/>
        <end position="89"/>
    </location>
    <ligand>
        <name>AMP</name>
        <dbReference type="ChEBI" id="CHEBI:456215"/>
    </ligand>
</feature>
<feature type="binding site" evidence="1">
    <location>
        <position position="93"/>
    </location>
    <ligand>
        <name>AMP</name>
        <dbReference type="ChEBI" id="CHEBI:456215"/>
    </ligand>
</feature>
<feature type="binding site" evidence="1">
    <location>
        <position position="128"/>
    </location>
    <ligand>
        <name>ATP</name>
        <dbReference type="ChEBI" id="CHEBI:30616"/>
    </ligand>
</feature>
<feature type="binding site" evidence="1">
    <location>
        <begin position="137"/>
        <end position="138"/>
    </location>
    <ligand>
        <name>ATP</name>
        <dbReference type="ChEBI" id="CHEBI:30616"/>
    </ligand>
</feature>
<feature type="binding site" evidence="1">
    <location>
        <position position="156"/>
    </location>
    <ligand>
        <name>AMP</name>
        <dbReference type="ChEBI" id="CHEBI:456215"/>
    </ligand>
</feature>
<feature type="binding site" evidence="1">
    <location>
        <position position="167"/>
    </location>
    <ligand>
        <name>AMP</name>
        <dbReference type="ChEBI" id="CHEBI:456215"/>
    </ligand>
</feature>
<feature type="binding site" evidence="1">
    <location>
        <position position="195"/>
    </location>
    <ligand>
        <name>ATP</name>
        <dbReference type="ChEBI" id="CHEBI:30616"/>
    </ligand>
</feature>
<dbReference type="EC" id="2.7.4.3" evidence="1"/>
<dbReference type="EMBL" id="CP000918">
    <property type="protein sequence ID" value="ACO16966.1"/>
    <property type="molecule type" value="Genomic_DNA"/>
</dbReference>
<dbReference type="RefSeq" id="WP_001050451.1">
    <property type="nucleotide sequence ID" value="NC_012468.1"/>
</dbReference>
<dbReference type="SMR" id="C1CAN3"/>
<dbReference type="KEGG" id="snm:SP70585_0286"/>
<dbReference type="HOGENOM" id="CLU_032354_1_2_9"/>
<dbReference type="UniPathway" id="UPA00588">
    <property type="reaction ID" value="UER00649"/>
</dbReference>
<dbReference type="Proteomes" id="UP000002211">
    <property type="component" value="Chromosome"/>
</dbReference>
<dbReference type="GO" id="GO:0005737">
    <property type="term" value="C:cytoplasm"/>
    <property type="evidence" value="ECO:0007669"/>
    <property type="project" value="UniProtKB-SubCell"/>
</dbReference>
<dbReference type="GO" id="GO:0004017">
    <property type="term" value="F:adenylate kinase activity"/>
    <property type="evidence" value="ECO:0007669"/>
    <property type="project" value="UniProtKB-UniRule"/>
</dbReference>
<dbReference type="GO" id="GO:0005524">
    <property type="term" value="F:ATP binding"/>
    <property type="evidence" value="ECO:0007669"/>
    <property type="project" value="UniProtKB-UniRule"/>
</dbReference>
<dbReference type="GO" id="GO:0044209">
    <property type="term" value="P:AMP salvage"/>
    <property type="evidence" value="ECO:0007669"/>
    <property type="project" value="UniProtKB-UniRule"/>
</dbReference>
<dbReference type="CDD" id="cd01428">
    <property type="entry name" value="ADK"/>
    <property type="match status" value="1"/>
</dbReference>
<dbReference type="FunFam" id="3.40.50.300:FF:000106">
    <property type="entry name" value="Adenylate kinase mitochondrial"/>
    <property type="match status" value="1"/>
</dbReference>
<dbReference type="Gene3D" id="3.40.50.300">
    <property type="entry name" value="P-loop containing nucleotide triphosphate hydrolases"/>
    <property type="match status" value="1"/>
</dbReference>
<dbReference type="HAMAP" id="MF_00235">
    <property type="entry name" value="Adenylate_kinase_Adk"/>
    <property type="match status" value="1"/>
</dbReference>
<dbReference type="InterPro" id="IPR006259">
    <property type="entry name" value="Adenyl_kin_sub"/>
</dbReference>
<dbReference type="InterPro" id="IPR000850">
    <property type="entry name" value="Adenylat/UMP-CMP_kin"/>
</dbReference>
<dbReference type="InterPro" id="IPR033690">
    <property type="entry name" value="Adenylat_kinase_CS"/>
</dbReference>
<dbReference type="InterPro" id="IPR027417">
    <property type="entry name" value="P-loop_NTPase"/>
</dbReference>
<dbReference type="NCBIfam" id="TIGR01351">
    <property type="entry name" value="adk"/>
    <property type="match status" value="1"/>
</dbReference>
<dbReference type="NCBIfam" id="NF001380">
    <property type="entry name" value="PRK00279.1-2"/>
    <property type="match status" value="1"/>
</dbReference>
<dbReference type="NCBIfam" id="NF001381">
    <property type="entry name" value="PRK00279.1-3"/>
    <property type="match status" value="1"/>
</dbReference>
<dbReference type="NCBIfam" id="NF001382">
    <property type="entry name" value="PRK00279.1-4"/>
    <property type="match status" value="1"/>
</dbReference>
<dbReference type="PANTHER" id="PTHR23359">
    <property type="entry name" value="NUCLEOTIDE KINASE"/>
    <property type="match status" value="1"/>
</dbReference>
<dbReference type="Pfam" id="PF00406">
    <property type="entry name" value="ADK"/>
    <property type="match status" value="1"/>
</dbReference>
<dbReference type="PRINTS" id="PR00094">
    <property type="entry name" value="ADENYLTKNASE"/>
</dbReference>
<dbReference type="SUPFAM" id="SSF52540">
    <property type="entry name" value="P-loop containing nucleoside triphosphate hydrolases"/>
    <property type="match status" value="1"/>
</dbReference>
<dbReference type="PROSITE" id="PS00113">
    <property type="entry name" value="ADENYLATE_KINASE"/>
    <property type="match status" value="1"/>
</dbReference>
<name>KAD_STRP7</name>
<protein>
    <recommendedName>
        <fullName evidence="1">Adenylate kinase</fullName>
        <shortName evidence="1">AK</shortName>
        <ecNumber evidence="1">2.7.4.3</ecNumber>
    </recommendedName>
    <alternativeName>
        <fullName evidence="1">ATP-AMP transphosphorylase</fullName>
    </alternativeName>
    <alternativeName>
        <fullName evidence="1">ATP:AMP phosphotransferase</fullName>
    </alternativeName>
    <alternativeName>
        <fullName evidence="1">Adenylate monophosphate kinase</fullName>
    </alternativeName>
</protein>
<evidence type="ECO:0000255" key="1">
    <source>
        <dbReference type="HAMAP-Rule" id="MF_00235"/>
    </source>
</evidence>
<comment type="function">
    <text evidence="1">Catalyzes the reversible transfer of the terminal phosphate group between ATP and AMP. Plays an important role in cellular energy homeostasis and in adenine nucleotide metabolism.</text>
</comment>
<comment type="catalytic activity">
    <reaction evidence="1">
        <text>AMP + ATP = 2 ADP</text>
        <dbReference type="Rhea" id="RHEA:12973"/>
        <dbReference type="ChEBI" id="CHEBI:30616"/>
        <dbReference type="ChEBI" id="CHEBI:456215"/>
        <dbReference type="ChEBI" id="CHEBI:456216"/>
        <dbReference type="EC" id="2.7.4.3"/>
    </reaction>
</comment>
<comment type="pathway">
    <text evidence="1">Purine metabolism; AMP biosynthesis via salvage pathway; AMP from ADP: step 1/1.</text>
</comment>
<comment type="subunit">
    <text evidence="1">Monomer.</text>
</comment>
<comment type="subcellular location">
    <subcellularLocation>
        <location evidence="1">Cytoplasm</location>
    </subcellularLocation>
</comment>
<comment type="domain">
    <text evidence="1">Consists of three domains, a large central CORE domain and two small peripheral domains, NMPbind and LID, which undergo movements during catalysis. The LID domain closes over the site of phosphoryl transfer upon ATP binding. Assembling and dissambling the active center during each catalytic cycle provides an effective means to prevent ATP hydrolysis.</text>
</comment>
<comment type="similarity">
    <text evidence="1">Belongs to the adenylate kinase family.</text>
</comment>
<proteinExistence type="inferred from homology"/>
<accession>C1CAN3</accession>